<feature type="chain" id="PRO_0000287055" description="Cyclin-T1-3">
    <location>
        <begin position="1"/>
        <end position="317"/>
    </location>
</feature>
<feature type="splice variant" id="VSP_025286" description="In isoform 2." evidence="2 3">
    <location>
        <begin position="78"/>
        <end position="317"/>
    </location>
</feature>
<feature type="sequence conflict" description="In Ref. 6; AAM67327." evidence="4" ref="6">
    <original>S</original>
    <variation>G</variation>
    <location>
        <position position="305"/>
    </location>
</feature>
<comment type="subunit">
    <text evidence="1">Interacts with CDKC-1 and CDKC-2.</text>
</comment>
<comment type="interaction">
    <interactant intactId="EBI-2025764">
        <id>Q8LBC0</id>
    </interactant>
    <interactant intactId="EBI-2025736">
        <id>Q9LFT8</id>
        <label>CDKC-1</label>
    </interactant>
    <organismsDiffer>false</organismsDiffer>
    <experiments>4</experiments>
</comment>
<comment type="interaction">
    <interactant intactId="EBI-2025764">
        <id>Q8LBC0</id>
    </interactant>
    <interactant intactId="EBI-2025894">
        <id>Q8W4P1</id>
        <label>CDKC-2</label>
    </interactant>
    <organismsDiffer>false</organismsDiffer>
    <experiments>2</experiments>
</comment>
<comment type="alternative products">
    <event type="alternative splicing"/>
    <isoform>
        <id>Q8LBC0-1</id>
        <name>1</name>
        <sequence type="displayed"/>
    </isoform>
    <isoform>
        <id>Q8LBC0-2</id>
        <name>2</name>
        <sequence type="described" ref="VSP_025286"/>
    </isoform>
</comment>
<comment type="tissue specificity">
    <text evidence="1">Abundantly expressed in flowers. Expressed in roots, seedlings, rosettes and stems.</text>
</comment>
<comment type="similarity">
    <text evidence="4">Belongs to the cyclin family. Cyclin T subfamily.</text>
</comment>
<comment type="sequence caution" evidence="4">
    <conflict type="erroneous gene model prediction">
        <sequence resource="EMBL-CDS" id="AAF24942"/>
    </conflict>
</comment>
<reference key="1">
    <citation type="journal article" date="2000" name="Nature">
        <title>Sequence and analysis of chromosome 1 of the plant Arabidopsis thaliana.</title>
        <authorList>
            <person name="Theologis A."/>
            <person name="Ecker J.R."/>
            <person name="Palm C.J."/>
            <person name="Federspiel N.A."/>
            <person name="Kaul S."/>
            <person name="White O."/>
            <person name="Alonso J."/>
            <person name="Altafi H."/>
            <person name="Araujo R."/>
            <person name="Bowman C.L."/>
            <person name="Brooks S.Y."/>
            <person name="Buehler E."/>
            <person name="Chan A."/>
            <person name="Chao Q."/>
            <person name="Chen H."/>
            <person name="Cheuk R.F."/>
            <person name="Chin C.W."/>
            <person name="Chung M.K."/>
            <person name="Conn L."/>
            <person name="Conway A.B."/>
            <person name="Conway A.R."/>
            <person name="Creasy T.H."/>
            <person name="Dewar K."/>
            <person name="Dunn P."/>
            <person name="Etgu P."/>
            <person name="Feldblyum T.V."/>
            <person name="Feng J.-D."/>
            <person name="Fong B."/>
            <person name="Fujii C.Y."/>
            <person name="Gill J.E."/>
            <person name="Goldsmith A.D."/>
            <person name="Haas B."/>
            <person name="Hansen N.F."/>
            <person name="Hughes B."/>
            <person name="Huizar L."/>
            <person name="Hunter J.L."/>
            <person name="Jenkins J."/>
            <person name="Johnson-Hopson C."/>
            <person name="Khan S."/>
            <person name="Khaykin E."/>
            <person name="Kim C.J."/>
            <person name="Koo H.L."/>
            <person name="Kremenetskaia I."/>
            <person name="Kurtz D.B."/>
            <person name="Kwan A."/>
            <person name="Lam B."/>
            <person name="Langin-Hooper S."/>
            <person name="Lee A."/>
            <person name="Lee J.M."/>
            <person name="Lenz C.A."/>
            <person name="Li J.H."/>
            <person name="Li Y.-P."/>
            <person name="Lin X."/>
            <person name="Liu S.X."/>
            <person name="Liu Z.A."/>
            <person name="Luros J.S."/>
            <person name="Maiti R."/>
            <person name="Marziali A."/>
            <person name="Militscher J."/>
            <person name="Miranda M."/>
            <person name="Nguyen M."/>
            <person name="Nierman W.C."/>
            <person name="Osborne B.I."/>
            <person name="Pai G."/>
            <person name="Peterson J."/>
            <person name="Pham P.K."/>
            <person name="Rizzo M."/>
            <person name="Rooney T."/>
            <person name="Rowley D."/>
            <person name="Sakano H."/>
            <person name="Salzberg S.L."/>
            <person name="Schwartz J.R."/>
            <person name="Shinn P."/>
            <person name="Southwick A.M."/>
            <person name="Sun H."/>
            <person name="Tallon L.J."/>
            <person name="Tambunga G."/>
            <person name="Toriumi M.J."/>
            <person name="Town C.D."/>
            <person name="Utterback T."/>
            <person name="Van Aken S."/>
            <person name="Vaysberg M."/>
            <person name="Vysotskaia V.S."/>
            <person name="Walker M."/>
            <person name="Wu D."/>
            <person name="Yu G."/>
            <person name="Fraser C.M."/>
            <person name="Venter J.C."/>
            <person name="Davis R.W."/>
        </authorList>
    </citation>
    <scope>NUCLEOTIDE SEQUENCE [LARGE SCALE GENOMIC DNA]</scope>
    <source>
        <strain>cv. Columbia</strain>
    </source>
</reference>
<reference key="2">
    <citation type="journal article" date="2017" name="Plant J.">
        <title>Araport11: a complete reannotation of the Arabidopsis thaliana reference genome.</title>
        <authorList>
            <person name="Cheng C.Y."/>
            <person name="Krishnakumar V."/>
            <person name="Chan A.P."/>
            <person name="Thibaud-Nissen F."/>
            <person name="Schobel S."/>
            <person name="Town C.D."/>
        </authorList>
    </citation>
    <scope>GENOME REANNOTATION</scope>
    <source>
        <strain>cv. Columbia</strain>
    </source>
</reference>
<reference key="3">
    <citation type="journal article" date="2002" name="Science">
        <title>Functional annotation of a full-length Arabidopsis cDNA collection.</title>
        <authorList>
            <person name="Seki M."/>
            <person name="Narusaka M."/>
            <person name="Kamiya A."/>
            <person name="Ishida J."/>
            <person name="Satou M."/>
            <person name="Sakurai T."/>
            <person name="Nakajima M."/>
            <person name="Enju A."/>
            <person name="Akiyama K."/>
            <person name="Oono Y."/>
            <person name="Muramatsu M."/>
            <person name="Hayashizaki Y."/>
            <person name="Kawai J."/>
            <person name="Carninci P."/>
            <person name="Itoh M."/>
            <person name="Ishii Y."/>
            <person name="Arakawa T."/>
            <person name="Shibata K."/>
            <person name="Shinagawa A."/>
            <person name="Shinozaki K."/>
        </authorList>
    </citation>
    <scope>NUCLEOTIDE SEQUENCE [LARGE SCALE MRNA] (ISOFORM 1)</scope>
    <source>
        <strain>cv. Columbia</strain>
    </source>
</reference>
<reference key="4">
    <citation type="journal article" date="2003" name="Science">
        <title>Empirical analysis of transcriptional activity in the Arabidopsis genome.</title>
        <authorList>
            <person name="Yamada K."/>
            <person name="Lim J."/>
            <person name="Dale J.M."/>
            <person name="Chen H."/>
            <person name="Shinn P."/>
            <person name="Palm C.J."/>
            <person name="Southwick A.M."/>
            <person name="Wu H.C."/>
            <person name="Kim C.J."/>
            <person name="Nguyen M."/>
            <person name="Pham P.K."/>
            <person name="Cheuk R.F."/>
            <person name="Karlin-Newmann G."/>
            <person name="Liu S.X."/>
            <person name="Lam B."/>
            <person name="Sakano H."/>
            <person name="Wu T."/>
            <person name="Yu G."/>
            <person name="Miranda M."/>
            <person name="Quach H.L."/>
            <person name="Tripp M."/>
            <person name="Chang C.H."/>
            <person name="Lee J.M."/>
            <person name="Toriumi M.J."/>
            <person name="Chan M.M."/>
            <person name="Tang C.C."/>
            <person name="Onodera C.S."/>
            <person name="Deng J.M."/>
            <person name="Akiyama K."/>
            <person name="Ansari Y."/>
            <person name="Arakawa T."/>
            <person name="Banh J."/>
            <person name="Banno F."/>
            <person name="Bowser L."/>
            <person name="Brooks S.Y."/>
            <person name="Carninci P."/>
            <person name="Chao Q."/>
            <person name="Choy N."/>
            <person name="Enju A."/>
            <person name="Goldsmith A.D."/>
            <person name="Gurjal M."/>
            <person name="Hansen N.F."/>
            <person name="Hayashizaki Y."/>
            <person name="Johnson-Hopson C."/>
            <person name="Hsuan V.W."/>
            <person name="Iida K."/>
            <person name="Karnes M."/>
            <person name="Khan S."/>
            <person name="Koesema E."/>
            <person name="Ishida J."/>
            <person name="Jiang P.X."/>
            <person name="Jones T."/>
            <person name="Kawai J."/>
            <person name="Kamiya A."/>
            <person name="Meyers C."/>
            <person name="Nakajima M."/>
            <person name="Narusaka M."/>
            <person name="Seki M."/>
            <person name="Sakurai T."/>
            <person name="Satou M."/>
            <person name="Tamse R."/>
            <person name="Vaysberg M."/>
            <person name="Wallender E.K."/>
            <person name="Wong C."/>
            <person name="Yamamura Y."/>
            <person name="Yuan S."/>
            <person name="Shinozaki K."/>
            <person name="Davis R.W."/>
            <person name="Theologis A."/>
            <person name="Ecker J.R."/>
        </authorList>
    </citation>
    <scope>NUCLEOTIDE SEQUENCE [LARGE SCALE MRNA] (ISOFORMS 1 AND 2)</scope>
    <source>
        <strain>cv. Columbia</strain>
    </source>
</reference>
<reference key="5">
    <citation type="submission" date="2006-07" db="EMBL/GenBank/DDBJ databases">
        <title>Large-scale analysis of RIKEN Arabidopsis full-length (RAFL) cDNAs.</title>
        <authorList>
            <person name="Totoki Y."/>
            <person name="Seki M."/>
            <person name="Ishida J."/>
            <person name="Nakajima M."/>
            <person name="Enju A."/>
            <person name="Kamiya A."/>
            <person name="Narusaka M."/>
            <person name="Shin-i T."/>
            <person name="Nakagawa M."/>
            <person name="Sakamoto N."/>
            <person name="Oishi K."/>
            <person name="Kohara Y."/>
            <person name="Kobayashi M."/>
            <person name="Toyoda A."/>
            <person name="Sakaki Y."/>
            <person name="Sakurai T."/>
            <person name="Iida K."/>
            <person name="Akiyama K."/>
            <person name="Satou M."/>
            <person name="Toyoda T."/>
            <person name="Konagaya A."/>
            <person name="Carninci P."/>
            <person name="Kawai J."/>
            <person name="Hayashizaki Y."/>
            <person name="Shinozaki K."/>
        </authorList>
    </citation>
    <scope>NUCLEOTIDE SEQUENCE [LARGE SCALE MRNA] (ISOFORM 2)</scope>
    <source>
        <strain>cv. Columbia</strain>
    </source>
</reference>
<reference key="6">
    <citation type="submission" date="2002-03" db="EMBL/GenBank/DDBJ databases">
        <title>Full-length cDNA from Arabidopsis thaliana.</title>
        <authorList>
            <person name="Brover V.V."/>
            <person name="Troukhan M.E."/>
            <person name="Alexandrov N.A."/>
            <person name="Lu Y.-P."/>
            <person name="Flavell R.B."/>
            <person name="Feldmann K.A."/>
        </authorList>
    </citation>
    <scope>NUCLEOTIDE SEQUENCE [LARGE SCALE MRNA] (ISOFORM 1)</scope>
</reference>
<reference key="7">
    <citation type="journal article" date="2003" name="Cell. Mol. Life Sci.">
        <title>Novel complexes of cyclin-dependent kinases and a cyclin-like protein from Arabidopsis thaliana with a function unrelated to cell division.</title>
        <authorList>
            <person name="Barroco R.M."/>
            <person name="de Veylder L."/>
            <person name="Magyar Z."/>
            <person name="Engler G."/>
            <person name="Inze D."/>
            <person name="Mironov V."/>
        </authorList>
    </citation>
    <scope>TISSUE SPECIFICITY</scope>
    <scope>INTERACTION WITH CDKC-1 AND CDKC-2</scope>
</reference>
<reference key="8">
    <citation type="journal article" date="2004" name="Plant Physiol.">
        <title>Genome-wide analysis of the cyclin family in Arabidopsis and comparative phylogenetic analysis of plant cyclin-like proteins.</title>
        <authorList>
            <person name="Wang G."/>
            <person name="Kong H."/>
            <person name="Sun Y."/>
            <person name="Zhang X."/>
            <person name="Zhang W."/>
            <person name="Altman N."/>
            <person name="dePamphilis C.W."/>
            <person name="Ma H."/>
        </authorList>
    </citation>
    <scope>GENE FAMILY</scope>
    <scope>NOMENCLATURE</scope>
</reference>
<gene>
    <name type="primary">CYCT1-3</name>
    <name type="synonym">CYCT</name>
    <name type="ordered locus">At1g27630</name>
    <name type="ORF">T17H3.12</name>
    <name type="ORF">T22C5.7</name>
    <name type="ORF">T22C5.8</name>
</gene>
<protein>
    <recommendedName>
        <fullName>Cyclin-T1-3</fullName>
        <shortName>CycT1;3</shortName>
    </recommendedName>
</protein>
<dbReference type="EMBL" id="AC005916">
    <property type="protein sequence ID" value="AAD46000.1"/>
    <property type="molecule type" value="Genomic_DNA"/>
</dbReference>
<dbReference type="EMBL" id="AC012375">
    <property type="protein sequence ID" value="AAF24941.1"/>
    <property type="molecule type" value="Genomic_DNA"/>
</dbReference>
<dbReference type="EMBL" id="AC012375">
    <property type="protein sequence ID" value="AAF24942.1"/>
    <property type="status" value="ALT_SEQ"/>
    <property type="molecule type" value="Genomic_DNA"/>
</dbReference>
<dbReference type="EMBL" id="CP002684">
    <property type="protein sequence ID" value="AEE30856.1"/>
    <property type="molecule type" value="Genomic_DNA"/>
</dbReference>
<dbReference type="EMBL" id="AK117692">
    <property type="protein sequence ID" value="BAC42344.1"/>
    <property type="molecule type" value="mRNA"/>
</dbReference>
<dbReference type="EMBL" id="AF344323">
    <property type="protein sequence ID" value="AAK06874.1"/>
    <property type="molecule type" value="mRNA"/>
</dbReference>
<dbReference type="EMBL" id="AY062805">
    <property type="protein sequence ID" value="AAL32883.1"/>
    <property type="molecule type" value="mRNA"/>
</dbReference>
<dbReference type="EMBL" id="AY081601">
    <property type="protein sequence ID" value="AAM10163.1"/>
    <property type="molecule type" value="mRNA"/>
</dbReference>
<dbReference type="EMBL" id="AK229729">
    <property type="protein sequence ID" value="BAF01567.1"/>
    <property type="molecule type" value="mRNA"/>
</dbReference>
<dbReference type="EMBL" id="AY087303">
    <property type="protein sequence ID" value="AAM67327.1"/>
    <property type="molecule type" value="mRNA"/>
</dbReference>
<dbReference type="PIR" id="D86401">
    <property type="entry name" value="D86401"/>
</dbReference>
<dbReference type="RefSeq" id="NP_001321314.1">
    <property type="nucleotide sequence ID" value="NM_001332773.1"/>
</dbReference>
<dbReference type="RefSeq" id="NP_001321315.1">
    <property type="nucleotide sequence ID" value="NM_001332774.1"/>
</dbReference>
<dbReference type="RefSeq" id="NP_001321317.1">
    <property type="nucleotide sequence ID" value="NM_001332776.1"/>
</dbReference>
<dbReference type="RefSeq" id="NP_001321318.1">
    <property type="nucleotide sequence ID" value="NM_001332777.1"/>
</dbReference>
<dbReference type="RefSeq" id="NP_174084.1">
    <molecule id="Q8LBC0-1"/>
    <property type="nucleotide sequence ID" value="NM_102528.4"/>
</dbReference>
<dbReference type="SMR" id="Q8LBC0"/>
<dbReference type="BioGRID" id="24890">
    <property type="interactions" value="2"/>
</dbReference>
<dbReference type="FunCoup" id="Q8LBC0">
    <property type="interactions" value="2371"/>
</dbReference>
<dbReference type="IntAct" id="Q8LBC0">
    <property type="interactions" value="2"/>
</dbReference>
<dbReference type="STRING" id="3702.Q8LBC0"/>
<dbReference type="PaxDb" id="3702-AT1G27630.1"/>
<dbReference type="EnsemblPlants" id="AT1G27630.1">
    <molecule id="Q8LBC0-1"/>
    <property type="protein sequence ID" value="AT1G27630.1"/>
    <property type="gene ID" value="AT1G27630"/>
</dbReference>
<dbReference type="GeneID" id="839655"/>
<dbReference type="Gramene" id="AT1G27630.1">
    <molecule id="Q8LBC0-1"/>
    <property type="protein sequence ID" value="AT1G27630.1"/>
    <property type="gene ID" value="AT1G27630"/>
</dbReference>
<dbReference type="KEGG" id="ath:AT1G27630"/>
<dbReference type="Araport" id="AT1G27630"/>
<dbReference type="TAIR" id="AT1G27630">
    <property type="gene designation" value="CYCT1"/>
</dbReference>
<dbReference type="eggNOG" id="KOG0834">
    <property type="taxonomic scope" value="Eukaryota"/>
</dbReference>
<dbReference type="HOGENOM" id="CLU_022000_4_1_1"/>
<dbReference type="InParanoid" id="Q8LBC0"/>
<dbReference type="OMA" id="FANDGPP"/>
<dbReference type="OrthoDB" id="10264655at2759"/>
<dbReference type="PhylomeDB" id="Q8LBC0"/>
<dbReference type="PRO" id="PR:Q8LBC0"/>
<dbReference type="Proteomes" id="UP000006548">
    <property type="component" value="Chromosome 1"/>
</dbReference>
<dbReference type="ExpressionAtlas" id="Q8LBC0">
    <property type="expression patterns" value="baseline and differential"/>
</dbReference>
<dbReference type="GO" id="GO:0005634">
    <property type="term" value="C:nucleus"/>
    <property type="evidence" value="ECO:0007005"/>
    <property type="project" value="TAIR"/>
</dbReference>
<dbReference type="GO" id="GO:0016538">
    <property type="term" value="F:cyclin-dependent protein serine/threonine kinase regulator activity"/>
    <property type="evidence" value="ECO:0007669"/>
    <property type="project" value="InterPro"/>
</dbReference>
<dbReference type="GO" id="GO:0051301">
    <property type="term" value="P:cell division"/>
    <property type="evidence" value="ECO:0007669"/>
    <property type="project" value="UniProtKB-KW"/>
</dbReference>
<dbReference type="GO" id="GO:0006357">
    <property type="term" value="P:regulation of transcription by RNA polymerase II"/>
    <property type="evidence" value="ECO:0007669"/>
    <property type="project" value="InterPro"/>
</dbReference>
<dbReference type="CDD" id="cd20587">
    <property type="entry name" value="CYCLIN_AcCycT_rpt1"/>
    <property type="match status" value="1"/>
</dbReference>
<dbReference type="CDD" id="cd20588">
    <property type="entry name" value="CYCLIN_AcCycT_rpt2"/>
    <property type="match status" value="1"/>
</dbReference>
<dbReference type="FunFam" id="1.10.472.10:FF:000081">
    <property type="entry name" value="Cyclin family protein"/>
    <property type="match status" value="1"/>
</dbReference>
<dbReference type="Gene3D" id="1.10.472.10">
    <property type="entry name" value="Cyclin-like"/>
    <property type="match status" value="2"/>
</dbReference>
<dbReference type="InterPro" id="IPR013763">
    <property type="entry name" value="Cyclin-like_dom"/>
</dbReference>
<dbReference type="InterPro" id="IPR036915">
    <property type="entry name" value="Cyclin-like_sf"/>
</dbReference>
<dbReference type="InterPro" id="IPR043198">
    <property type="entry name" value="Cyclin/Ssn8"/>
</dbReference>
<dbReference type="InterPro" id="IPR006671">
    <property type="entry name" value="Cyclin_N"/>
</dbReference>
<dbReference type="PANTHER" id="PTHR10026">
    <property type="entry name" value="CYCLIN"/>
    <property type="match status" value="1"/>
</dbReference>
<dbReference type="Pfam" id="PF00134">
    <property type="entry name" value="Cyclin_N"/>
    <property type="match status" value="1"/>
</dbReference>
<dbReference type="Pfam" id="PF21797">
    <property type="entry name" value="CycT2-like_C"/>
    <property type="match status" value="1"/>
</dbReference>
<dbReference type="SMART" id="SM00385">
    <property type="entry name" value="CYCLIN"/>
    <property type="match status" value="2"/>
</dbReference>
<dbReference type="SUPFAM" id="SSF47954">
    <property type="entry name" value="Cyclin-like"/>
    <property type="match status" value="2"/>
</dbReference>
<proteinExistence type="evidence at protein level"/>
<organism>
    <name type="scientific">Arabidopsis thaliana</name>
    <name type="common">Mouse-ear cress</name>
    <dbReference type="NCBI Taxonomy" id="3702"/>
    <lineage>
        <taxon>Eukaryota</taxon>
        <taxon>Viridiplantae</taxon>
        <taxon>Streptophyta</taxon>
        <taxon>Embryophyta</taxon>
        <taxon>Tracheophyta</taxon>
        <taxon>Spermatophyta</taxon>
        <taxon>Magnoliopsida</taxon>
        <taxon>eudicotyledons</taxon>
        <taxon>Gunneridae</taxon>
        <taxon>Pentapetalae</taxon>
        <taxon>rosids</taxon>
        <taxon>malvids</taxon>
        <taxon>Brassicales</taxon>
        <taxon>Brassicaceae</taxon>
        <taxon>Camelineae</taxon>
        <taxon>Arabidopsis</taxon>
    </lineage>
</organism>
<accession>Q8LBC0</accession>
<accession>Q9SFZ4</accession>
<accession>Q9SFZ5</accession>
<accession>Q9SXC3</accession>
<name>CCT13_ARATH</name>
<evidence type="ECO:0000269" key="1">
    <source>
    </source>
</evidence>
<evidence type="ECO:0000303" key="2">
    <source>
    </source>
</evidence>
<evidence type="ECO:0000303" key="3">
    <source ref="5"/>
</evidence>
<evidence type="ECO:0000305" key="4"/>
<sequence length="317" mass="36762">MGEEHPRKRSRQHFEAEARNVSLFESPQCETSKWYFSREEIERFSPSRKDGIDLVKESFLRSSYCTFLQRLGMKLHVSQVTISCAMVMCHRFYMRQSHAKNDWQTIATSSLFLACKAEDEPCQLSSVVVASYEIIYEWDPSASIRIHQTECYHEFKEIILSGESLLLSTSAFHLDIELPYKPLAAALNRLNAWPDLATAAWNFVHDWIRTTLCLQYKPHVIATATVHLAATFQNAKVGSRRDWWLEFGVTTKLLKEVIQEMCTLIEVDRRRNMPPPPPPPRRELSWAIPAAVKPVHMARAYPFHSYPLQSYRQAGIW</sequence>
<keyword id="KW-0025">Alternative splicing</keyword>
<keyword id="KW-0131">Cell cycle</keyword>
<keyword id="KW-0132">Cell division</keyword>
<keyword id="KW-0195">Cyclin</keyword>
<keyword id="KW-1185">Reference proteome</keyword>